<evidence type="ECO:0000250" key="1"/>
<evidence type="ECO:0000255" key="2">
    <source>
        <dbReference type="PROSITE-ProRule" id="PRU00303"/>
    </source>
</evidence>
<evidence type="ECO:0000269" key="3">
    <source>
    </source>
</evidence>
<evidence type="ECO:0000269" key="4">
    <source>
    </source>
</evidence>
<evidence type="ECO:0000269" key="5">
    <source>
    </source>
</evidence>
<evidence type="ECO:0000269" key="6">
    <source>
    </source>
</evidence>
<evidence type="ECO:0000269" key="7">
    <source>
    </source>
</evidence>
<evidence type="ECO:0000303" key="8">
    <source>
    </source>
</evidence>
<evidence type="ECO:0000305" key="9"/>
<evidence type="ECO:0000305" key="10">
    <source>
    </source>
</evidence>
<evidence type="ECO:0000305" key="11">
    <source>
    </source>
</evidence>
<proteinExistence type="evidence at protein level"/>
<protein>
    <recommendedName>
        <fullName>Glycerophosphodiester phosphodiesterase</fullName>
        <shortName>Glycerophosphoryl diester phosphodiesterase</shortName>
        <shortName evidence="8">Gpd</shortName>
        <ecNumber>3.1.4.46</ecNumber>
    </recommendedName>
</protein>
<keyword id="KW-0997">Cell inner membrane</keyword>
<keyword id="KW-1003">Cell membrane</keyword>
<keyword id="KW-0319">Glycerol metabolism</keyword>
<keyword id="KW-0378">Hydrolase</keyword>
<keyword id="KW-0449">Lipoprotein</keyword>
<keyword id="KW-0472">Membrane</keyword>
<keyword id="KW-0564">Palmitate</keyword>
<keyword id="KW-1185">Reference proteome</keyword>
<keyword id="KW-0732">Signal</keyword>
<organism>
    <name type="scientific">Treponema pallidum (strain Nichols)</name>
    <dbReference type="NCBI Taxonomy" id="243276"/>
    <lineage>
        <taxon>Bacteria</taxon>
        <taxon>Pseudomonadati</taxon>
        <taxon>Spirochaetota</taxon>
        <taxon>Spirochaetia</taxon>
        <taxon>Spirochaetales</taxon>
        <taxon>Treponemataceae</taxon>
        <taxon>Treponema</taxon>
    </lineage>
</organism>
<accession>O30405</accession>
<gene>
    <name type="primary">glpQ</name>
    <name type="synonym">glp</name>
    <name type="ordered locus">TP_0257</name>
</gene>
<sequence>MRGTYCVTLWGGVFAALVAGCASERMIVAYRGAAGYVPEHTFASKVLAFAQGADYLQQDVVLSKDNQLIVAQSHILDNMTDVAEKFPRRQRADGHFYVIDFTVEELSLLRATNSFYTRGKRHTPVYGQRFPLWKPGFRLHTFEEELQFIRGLEQTTGKKIGIYSEIKVPWFHHQEGKDIAALTLALLKKYGYQSRSDLVYVQTYDFNELKRIKRELLPKYEMNVKLIQRVAYTDQRETQEKDSRGKWINYNYNWMFEPGGMQKIAKYADGVGPDWRMLIENEWSKVGAVRLSPMVSAIQDAKLECHVHTVRKETLPSYARTMDEMFSILFKQTGANVVLTDFPDLGVKFLGKPARY</sequence>
<feature type="signal peptide" evidence="2">
    <location>
        <begin position="1"/>
        <end position="20"/>
    </location>
</feature>
<feature type="chain" id="PRO_0000012596" description="Glycerophosphodiester phosphodiesterase">
    <location>
        <begin position="21"/>
        <end position="356"/>
    </location>
</feature>
<feature type="domain" description="GP-PDE">
    <location>
        <begin position="25"/>
        <end position="314"/>
    </location>
</feature>
<feature type="lipid moiety-binding region" description="N-palmitoyl cysteine" evidence="2">
    <location>
        <position position="21"/>
    </location>
</feature>
<feature type="lipid moiety-binding region" description="S-diacylglycerol cysteine" evidence="2">
    <location>
        <position position="21"/>
    </location>
</feature>
<reference key="1">
    <citation type="journal article" date="1997" name="FEMS Microbiol. Lett.">
        <title>Identification of the Treponema pallidum subsp. pallidum glycerophosphodiester phosphodiesterase homologue.</title>
        <authorList>
            <person name="Stebeck C.E."/>
            <person name="Shaffer J.M."/>
            <person name="Arroll T.W."/>
            <person name="Lukehart S.A."/>
            <person name="van Voorhis W.C."/>
        </authorList>
    </citation>
    <scope>NUCLEOTIDE SEQUENCE [GENOMIC DNA]</scope>
    <source>
        <strain>Nichols</strain>
    </source>
</reference>
<reference key="2">
    <citation type="journal article" date="1997" name="Infect. Immun.">
        <title>Identification of homologs for thioredoxin, peptidyl prolyl cis-trans isomerase, and glycerophosphodiester phosphodiesterase in outer membrane fractions from Treponema pallidum, the syphilis spirochete.</title>
        <authorList>
            <person name="Shevchenko D.V."/>
            <person name="Akins D.R."/>
            <person name="Robinson E.J."/>
            <person name="Li M."/>
            <person name="Shevchenko O.V."/>
            <person name="Radolf J.D."/>
        </authorList>
    </citation>
    <scope>NUCLEOTIDE SEQUENCE [GENOMIC DNA]</scope>
</reference>
<reference key="3">
    <citation type="journal article" date="1998" name="Science">
        <title>Complete genome sequence of Treponema pallidum, the syphilis spirochete.</title>
        <authorList>
            <person name="Fraser C.M."/>
            <person name="Norris S.J."/>
            <person name="Weinstock G.M."/>
            <person name="White O."/>
            <person name="Sutton G.G."/>
            <person name="Dodson R.J."/>
            <person name="Gwinn M.L."/>
            <person name="Hickey E.K."/>
            <person name="Clayton R.A."/>
            <person name="Ketchum K.A."/>
            <person name="Sodergren E."/>
            <person name="Hardham J.M."/>
            <person name="McLeod M.P."/>
            <person name="Salzberg S.L."/>
            <person name="Peterson J.D."/>
            <person name="Khalak H.G."/>
            <person name="Richardson D.L."/>
            <person name="Howell J.K."/>
            <person name="Chidambaram M."/>
            <person name="Utterback T.R."/>
            <person name="McDonald L.A."/>
            <person name="Artiach P."/>
            <person name="Bowman C."/>
            <person name="Cotton M.D."/>
            <person name="Fujii C."/>
            <person name="Garland S.A."/>
            <person name="Hatch B."/>
            <person name="Horst K."/>
            <person name="Roberts K.M."/>
            <person name="Sandusky M."/>
            <person name="Weidman J.F."/>
            <person name="Smith H.O."/>
            <person name="Venter J.C."/>
        </authorList>
    </citation>
    <scope>NUCLEOTIDE SEQUENCE [LARGE SCALE GENOMIC DNA]</scope>
    <source>
        <strain>Nichols</strain>
    </source>
</reference>
<reference key="4">
    <citation type="journal article" date="1998" name="Infect. Immun.">
        <title>Function and protective capacity of Treponema pallidum subsp. pallidum glycerophosphodiester phosphodiesterase.</title>
        <authorList>
            <person name="Cameron C.E."/>
            <person name="Castro C."/>
            <person name="Lukehart S.A."/>
            <person name="Van Voorhis W.C."/>
        </authorList>
    </citation>
    <scope>FUNCTION IN HOST INFECTION</scope>
    <scope>BIOTECHNOLOGY</scope>
    <source>
        <strain>Nichols</strain>
    </source>
</reference>
<reference key="5">
    <citation type="journal article" date="1999" name="Infect. Immun.">
        <title>Membrane topology and cellular location of the Treponema pallidum glycerophosphodiester phosphodiesterase (GlpQ) ortholog.</title>
        <authorList>
            <person name="Shevchenko D.V."/>
            <person name="Sellati T.J."/>
            <person name="Cox D.L."/>
            <person name="Shevchenko O.V."/>
            <person name="Robinson E.J."/>
            <person name="Radolf J.D."/>
        </authorList>
    </citation>
    <scope>PALMITOYLATION</scope>
    <scope>EXPRESSION IN E.COLI</scope>
    <source>
        <strain>Nichols</strain>
    </source>
</reference>
<reference key="6">
    <citation type="journal article" date="2003" name="J. Clin. Microbiol.">
        <title>Serodiagnosis of syphilis: antibodies to recombinant Tp0453, Tp92, and Gpd proteins are sensitive and specific indicators of infection by Treponema pallidum.</title>
        <authorList>
            <person name="Van Voorhis W.C."/>
            <person name="Barrett L.K."/>
            <person name="Lukehart S.A."/>
            <person name="Schmidt B."/>
            <person name="Schriefer M."/>
            <person name="Cameron C.E."/>
        </authorList>
    </citation>
    <scope>BIOTECHNOLOGY</scope>
</reference>
<reference key="7">
    <citation type="journal article" date="2005" name="J. Bacteriol.">
        <title>TP0453, a concealed outer membrane protein of Treponema pallidum, enhances membrane permeability.</title>
        <authorList>
            <person name="Hazlett K.R."/>
            <person name="Cox D.L."/>
            <person name="Decaffmeyer M."/>
            <person name="Bennett M.P."/>
            <person name="Desrosiers D.C."/>
            <person name="La Vake C.J."/>
            <person name="La Vake M.E."/>
            <person name="Bourell K.W."/>
            <person name="Robinson E.J."/>
            <person name="Brasseur R."/>
            <person name="Radolf J.D."/>
        </authorList>
    </citation>
    <scope>SUBCELLULAR LOCATION</scope>
    <scope>PALMITOYLATION</scope>
    <scope>EXPRESSION IN E.COLI</scope>
</reference>
<dbReference type="EC" id="3.1.4.46"/>
<dbReference type="EMBL" id="AF004286">
    <property type="protein sequence ID" value="AAB81591.1"/>
    <property type="molecule type" value="Genomic_DNA"/>
</dbReference>
<dbReference type="EMBL" id="U95744">
    <property type="protein sequence ID" value="AAC08323.1"/>
    <property type="molecule type" value="Genomic_DNA"/>
</dbReference>
<dbReference type="EMBL" id="AE000520">
    <property type="protein sequence ID" value="AAC65246.1"/>
    <property type="molecule type" value="Genomic_DNA"/>
</dbReference>
<dbReference type="PIR" id="F71346">
    <property type="entry name" value="F71346"/>
</dbReference>
<dbReference type="SMR" id="O30405"/>
<dbReference type="IntAct" id="O30405">
    <property type="interactions" value="3"/>
</dbReference>
<dbReference type="STRING" id="243276.TP_0257"/>
<dbReference type="EnsemblBacteria" id="AAC65246">
    <property type="protein sequence ID" value="AAC65246"/>
    <property type="gene ID" value="TP_0257"/>
</dbReference>
<dbReference type="KEGG" id="tpa:TP_0257"/>
<dbReference type="KEGG" id="tpw:TPANIC_0257"/>
<dbReference type="eggNOG" id="COG0584">
    <property type="taxonomic scope" value="Bacteria"/>
</dbReference>
<dbReference type="HOGENOM" id="CLU_030226_1_0_12"/>
<dbReference type="OrthoDB" id="384721at2"/>
<dbReference type="BRENDA" id="3.1.4.46">
    <property type="organism ID" value="6429"/>
</dbReference>
<dbReference type="Proteomes" id="UP000000811">
    <property type="component" value="Chromosome"/>
</dbReference>
<dbReference type="GO" id="GO:0042597">
    <property type="term" value="C:periplasmic space"/>
    <property type="evidence" value="ECO:0007669"/>
    <property type="project" value="TreeGrafter"/>
</dbReference>
<dbReference type="GO" id="GO:0005886">
    <property type="term" value="C:plasma membrane"/>
    <property type="evidence" value="ECO:0007669"/>
    <property type="project" value="UniProtKB-SubCell"/>
</dbReference>
<dbReference type="GO" id="GO:0008889">
    <property type="term" value="F:glycerophosphodiester phosphodiesterase activity"/>
    <property type="evidence" value="ECO:0007669"/>
    <property type="project" value="UniProtKB-EC"/>
</dbReference>
<dbReference type="GO" id="GO:0006071">
    <property type="term" value="P:glycerol metabolic process"/>
    <property type="evidence" value="ECO:0007669"/>
    <property type="project" value="UniProtKB-KW"/>
</dbReference>
<dbReference type="GO" id="GO:0006629">
    <property type="term" value="P:lipid metabolic process"/>
    <property type="evidence" value="ECO:0007669"/>
    <property type="project" value="InterPro"/>
</dbReference>
<dbReference type="CDD" id="cd08600">
    <property type="entry name" value="GDPD_EcGlpQ_like"/>
    <property type="match status" value="1"/>
</dbReference>
<dbReference type="FunFam" id="3.20.20.190:FF:000009">
    <property type="entry name" value="Glycerophosphodiester phosphodiesterase, periplasmic"/>
    <property type="match status" value="1"/>
</dbReference>
<dbReference type="Gene3D" id="3.20.20.190">
    <property type="entry name" value="Phosphatidylinositol (PI) phosphodiesterase"/>
    <property type="match status" value="1"/>
</dbReference>
<dbReference type="InterPro" id="IPR030395">
    <property type="entry name" value="GP_PDE_dom"/>
</dbReference>
<dbReference type="InterPro" id="IPR017946">
    <property type="entry name" value="PLC-like_Pdiesterase_TIM-brl"/>
</dbReference>
<dbReference type="NCBIfam" id="NF008354">
    <property type="entry name" value="PRK11143.1"/>
    <property type="match status" value="1"/>
</dbReference>
<dbReference type="PANTHER" id="PTHR43620:SF7">
    <property type="entry name" value="GLYCEROPHOSPHODIESTER PHOSPHODIESTERASE GDPD5-RELATED"/>
    <property type="match status" value="1"/>
</dbReference>
<dbReference type="PANTHER" id="PTHR43620">
    <property type="entry name" value="GLYCEROPHOSPHORYL DIESTER PHOSPHODIESTERASE"/>
    <property type="match status" value="1"/>
</dbReference>
<dbReference type="Pfam" id="PF03009">
    <property type="entry name" value="GDPD"/>
    <property type="match status" value="1"/>
</dbReference>
<dbReference type="SUPFAM" id="SSF51695">
    <property type="entry name" value="PLC-like phosphodiesterases"/>
    <property type="match status" value="1"/>
</dbReference>
<dbReference type="PROSITE" id="PS51704">
    <property type="entry name" value="GP_PDE"/>
    <property type="match status" value="1"/>
</dbReference>
<dbReference type="PROSITE" id="PS51257">
    <property type="entry name" value="PROKAR_LIPOPROTEIN"/>
    <property type="match status" value="1"/>
</dbReference>
<comment type="function">
    <text evidence="1">Glycerophosphoryl diester phosphodiesterase hydrolyzes deacylated phospholipids to G3P and the corresponding alcohols.</text>
</comment>
<comment type="function">
    <text evidence="7">Binds human IgA, IgD and the Fc portion of IgG but not IgM, which may contribute to evasion of the human immune system.</text>
</comment>
<comment type="catalytic activity">
    <reaction>
        <text>a sn-glycero-3-phosphodiester + H2O = an alcohol + sn-glycerol 3-phosphate + H(+)</text>
        <dbReference type="Rhea" id="RHEA:12969"/>
        <dbReference type="ChEBI" id="CHEBI:15377"/>
        <dbReference type="ChEBI" id="CHEBI:15378"/>
        <dbReference type="ChEBI" id="CHEBI:30879"/>
        <dbReference type="ChEBI" id="CHEBI:57597"/>
        <dbReference type="ChEBI" id="CHEBI:83408"/>
        <dbReference type="EC" id="3.1.4.46"/>
    </reaction>
</comment>
<comment type="subcellular location">
    <subcellularLocation>
        <location evidence="10">Cell inner membrane</location>
        <topology evidence="10 11">Lipid-anchor</topology>
        <orientation evidence="10">Periplasmic side</orientation>
    </subcellularLocation>
    <text evidence="6 7">Has also been identified in cell outer membrane, but this may be incorrect (PubMed:9317025, PubMed:9826352).</text>
</comment>
<comment type="PTM">
    <text evidence="3 5">Palmitoylated upon expression of a fusion protein with first 40 residues fused to PhoA in E.coli.</text>
</comment>
<comment type="biotechnology">
    <text evidence="4 7">Immunization of rabbits with this protein partially protects against subsequent intradermal challenge, suggesting it may be a viable vaccine candidate (PubMed:9826352). Recognized by sera from 39/43 syphilis patients, it shows promise as a diagnostic antigen (PubMed:12904373).</text>
</comment>
<comment type="miscellaneous">
    <text evidence="9">The outer membrane of T.pallidum has no lipopolysaccharides, few proteins and is a fluid and very fragile bilayer. Its lack of surface antigenicity is thought to contribute to the ability of the pathogen to evade the human immune system.</text>
</comment>
<comment type="similarity">
    <text evidence="9">Belongs to the glycerophosphoryl diester phosphodiesterase family.</text>
</comment>
<name>GLPQ_TREPA</name>